<sequence>MFGDSDGSKDANPGAPPSTTDPPFPNRELTLSSYLCEKPTLASAAAGGGGGAGPSSPPNPAAAAAGDDGKHCVERDFLHLSAPKRGDPPGDDSSVVGGKKPRLDSLQLSLSLNSDGPAAPPSSQPPLASLLQPVPATDGDLRGAAAAAAVPAAPARRTYSATTARTRSINSDDMSYSYSIFSHNPSCSLTHNSTDIYAAGEGTNGSVHSRFNFRPMGDGSVAFATPPLKEGTSSFFPTELPARMAAAAAAAAASAGGSFDGGRGGLHASRPDKILRDIVSDSVTAMAQVLQDFPSERLELLREAVRGMIDSHEKRDELASLQRKLERRSDLTTETLGRANRTQLEILVAIKTGIATFVTGKGRVPSSELVEMFLMTRCRNLNCKSTLPVDDCDCKICSTKKGFCSACTCSVCHKFDCAANTCTWVGCDVCGHWCHVACALERNLIRPGPTLKGPIGTTEMQFQCLACNHSSEMFGFVKEVFNCCAENWNAETLMKELDFVRKIFAGCEDFEGKGLHAKAEEVLSLLGKKIISPLDATNSILQFFKYGVTDYSVTGSTSKGILAAQASQSTDMRSLQTPTITPPKSSFNFKTTTSILDTDALKPSPKPLSIEPHFSTASKEDDSSLETIVKCKEAEAKLFQKLADDARKEVDSYRQIVRSRTQKLEEEYAAKLAKVCFQETEEKRRKKLEELKMLENSHYDYLKMKMRMQTDIQGLLERMEATKKMWV</sequence>
<reference key="1">
    <citation type="journal article" date="2005" name="Genome Res.">
        <title>Sequence, annotation, and analysis of synteny between rice chromosome 3 and diverged grass species.</title>
        <authorList>
            <consortium name="The rice chromosome 3 sequencing consortium"/>
            <person name="Buell C.R."/>
            <person name="Yuan Q."/>
            <person name="Ouyang S."/>
            <person name="Liu J."/>
            <person name="Zhu W."/>
            <person name="Wang A."/>
            <person name="Maiti R."/>
            <person name="Haas B."/>
            <person name="Wortman J."/>
            <person name="Pertea M."/>
            <person name="Jones K.M."/>
            <person name="Kim M."/>
            <person name="Overton L."/>
            <person name="Tsitrin T."/>
            <person name="Fadrosh D."/>
            <person name="Bera J."/>
            <person name="Weaver B."/>
            <person name="Jin S."/>
            <person name="Johri S."/>
            <person name="Reardon M."/>
            <person name="Webb K."/>
            <person name="Hill J."/>
            <person name="Moffat K."/>
            <person name="Tallon L."/>
            <person name="Van Aken S."/>
            <person name="Lewis M."/>
            <person name="Utterback T."/>
            <person name="Feldblyum T."/>
            <person name="Zismann V."/>
            <person name="Iobst S."/>
            <person name="Hsiao J."/>
            <person name="de Vazeille A.R."/>
            <person name="Salzberg S.L."/>
            <person name="White O."/>
            <person name="Fraser C.M."/>
            <person name="Yu Y."/>
            <person name="Kim H."/>
            <person name="Rambo T."/>
            <person name="Currie J."/>
            <person name="Collura K."/>
            <person name="Kernodle-Thompson S."/>
            <person name="Wei F."/>
            <person name="Kudrna K."/>
            <person name="Ammiraju J.S.S."/>
            <person name="Luo M."/>
            <person name="Goicoechea J.L."/>
            <person name="Wing R.A."/>
            <person name="Henry D."/>
            <person name="Oates R."/>
            <person name="Palmer M."/>
            <person name="Pries G."/>
            <person name="Saski C."/>
            <person name="Simmons J."/>
            <person name="Soderlund C."/>
            <person name="Nelson W."/>
            <person name="de la Bastide M."/>
            <person name="Spiegel L."/>
            <person name="Nascimento L."/>
            <person name="Huang E."/>
            <person name="Preston R."/>
            <person name="Zutavern T."/>
            <person name="Palmer L."/>
            <person name="O'Shaughnessy A."/>
            <person name="Dike S."/>
            <person name="McCombie W.R."/>
            <person name="Minx P."/>
            <person name="Cordum H."/>
            <person name="Wilson R."/>
            <person name="Jin W."/>
            <person name="Lee H.R."/>
            <person name="Jiang J."/>
            <person name="Jackson S."/>
        </authorList>
    </citation>
    <scope>NUCLEOTIDE SEQUENCE [LARGE SCALE GENOMIC DNA]</scope>
    <source>
        <strain>cv. Nipponbare</strain>
    </source>
</reference>
<reference key="2">
    <citation type="journal article" date="2005" name="Nature">
        <title>The map-based sequence of the rice genome.</title>
        <authorList>
            <consortium name="International rice genome sequencing project (IRGSP)"/>
        </authorList>
    </citation>
    <scope>NUCLEOTIDE SEQUENCE [LARGE SCALE GENOMIC DNA]</scope>
    <source>
        <strain>cv. Nipponbare</strain>
    </source>
</reference>
<reference key="3">
    <citation type="journal article" date="2008" name="Nucleic Acids Res.">
        <title>The rice annotation project database (RAP-DB): 2008 update.</title>
        <authorList>
            <consortium name="The rice annotation project (RAP)"/>
        </authorList>
    </citation>
    <scope>GENOME REANNOTATION</scope>
    <source>
        <strain>cv. Nipponbare</strain>
    </source>
</reference>
<reference key="4">
    <citation type="journal article" date="2013" name="Rice">
        <title>Improvement of the Oryza sativa Nipponbare reference genome using next generation sequence and optical map data.</title>
        <authorList>
            <person name="Kawahara Y."/>
            <person name="de la Bastide M."/>
            <person name="Hamilton J.P."/>
            <person name="Kanamori H."/>
            <person name="McCombie W.R."/>
            <person name="Ouyang S."/>
            <person name="Schwartz D.C."/>
            <person name="Tanaka T."/>
            <person name="Wu J."/>
            <person name="Zhou S."/>
            <person name="Childs K.L."/>
            <person name="Davidson R.M."/>
            <person name="Lin H."/>
            <person name="Quesada-Ocampo L."/>
            <person name="Vaillancourt B."/>
            <person name="Sakai H."/>
            <person name="Lee S.S."/>
            <person name="Kim J."/>
            <person name="Numa H."/>
            <person name="Itoh T."/>
            <person name="Buell C.R."/>
            <person name="Matsumoto T."/>
        </authorList>
    </citation>
    <scope>GENOME REANNOTATION</scope>
    <source>
        <strain>cv. Nipponbare</strain>
    </source>
</reference>
<reference key="5">
    <citation type="journal article" date="2005" name="PLoS Biol.">
        <title>The genomes of Oryza sativa: a history of duplications.</title>
        <authorList>
            <person name="Yu J."/>
            <person name="Wang J."/>
            <person name="Lin W."/>
            <person name="Li S."/>
            <person name="Li H."/>
            <person name="Zhou J."/>
            <person name="Ni P."/>
            <person name="Dong W."/>
            <person name="Hu S."/>
            <person name="Zeng C."/>
            <person name="Zhang J."/>
            <person name="Zhang Y."/>
            <person name="Li R."/>
            <person name="Xu Z."/>
            <person name="Li S."/>
            <person name="Li X."/>
            <person name="Zheng H."/>
            <person name="Cong L."/>
            <person name="Lin L."/>
            <person name="Yin J."/>
            <person name="Geng J."/>
            <person name="Li G."/>
            <person name="Shi J."/>
            <person name="Liu J."/>
            <person name="Lv H."/>
            <person name="Li J."/>
            <person name="Wang J."/>
            <person name="Deng Y."/>
            <person name="Ran L."/>
            <person name="Shi X."/>
            <person name="Wang X."/>
            <person name="Wu Q."/>
            <person name="Li C."/>
            <person name="Ren X."/>
            <person name="Wang J."/>
            <person name="Wang X."/>
            <person name="Li D."/>
            <person name="Liu D."/>
            <person name="Zhang X."/>
            <person name="Ji Z."/>
            <person name="Zhao W."/>
            <person name="Sun Y."/>
            <person name="Zhang Z."/>
            <person name="Bao J."/>
            <person name="Han Y."/>
            <person name="Dong L."/>
            <person name="Ji J."/>
            <person name="Chen P."/>
            <person name="Wu S."/>
            <person name="Liu J."/>
            <person name="Xiao Y."/>
            <person name="Bu D."/>
            <person name="Tan J."/>
            <person name="Yang L."/>
            <person name="Ye C."/>
            <person name="Zhang J."/>
            <person name="Xu J."/>
            <person name="Zhou Y."/>
            <person name="Yu Y."/>
            <person name="Zhang B."/>
            <person name="Zhuang S."/>
            <person name="Wei H."/>
            <person name="Liu B."/>
            <person name="Lei M."/>
            <person name="Yu H."/>
            <person name="Li Y."/>
            <person name="Xu H."/>
            <person name="Wei S."/>
            <person name="He X."/>
            <person name="Fang L."/>
            <person name="Zhang Z."/>
            <person name="Zhang Y."/>
            <person name="Huang X."/>
            <person name="Su Z."/>
            <person name="Tong W."/>
            <person name="Li J."/>
            <person name="Tong Z."/>
            <person name="Li S."/>
            <person name="Ye J."/>
            <person name="Wang L."/>
            <person name="Fang L."/>
            <person name="Lei T."/>
            <person name="Chen C.-S."/>
            <person name="Chen H.-C."/>
            <person name="Xu Z."/>
            <person name="Li H."/>
            <person name="Huang H."/>
            <person name="Zhang F."/>
            <person name="Xu H."/>
            <person name="Li N."/>
            <person name="Zhao C."/>
            <person name="Li S."/>
            <person name="Dong L."/>
            <person name="Huang Y."/>
            <person name="Li L."/>
            <person name="Xi Y."/>
            <person name="Qi Q."/>
            <person name="Li W."/>
            <person name="Zhang B."/>
            <person name="Hu W."/>
            <person name="Zhang Y."/>
            <person name="Tian X."/>
            <person name="Jiao Y."/>
            <person name="Liang X."/>
            <person name="Jin J."/>
            <person name="Gao L."/>
            <person name="Zheng W."/>
            <person name="Hao B."/>
            <person name="Liu S.-M."/>
            <person name="Wang W."/>
            <person name="Yuan L."/>
            <person name="Cao M."/>
            <person name="McDermott J."/>
            <person name="Samudrala R."/>
            <person name="Wang J."/>
            <person name="Wong G.K.-S."/>
            <person name="Yang H."/>
        </authorList>
    </citation>
    <scope>NUCLEOTIDE SEQUENCE [LARGE SCALE GENOMIC DNA]</scope>
    <source>
        <strain>cv. Nipponbare</strain>
    </source>
</reference>
<reference key="6">
    <citation type="journal article" date="2003" name="Science">
        <title>Collection, mapping, and annotation of over 28,000 cDNA clones from japonica rice.</title>
        <authorList>
            <consortium name="The rice full-length cDNA consortium"/>
        </authorList>
    </citation>
    <scope>NUCLEOTIDE SEQUENCE [LARGE SCALE MRNA]</scope>
    <source>
        <strain>cv. Nipponbare</strain>
    </source>
</reference>
<reference key="7">
    <citation type="journal article" date="2018" name="Plant J.">
        <title>A rice PHD-finger protein OsTITANIA, is a growth regulator that functions through elevating expression of transporter genes for multiple metals.</title>
        <authorList>
            <person name="Tanaka N."/>
            <person name="Uraguchi S."/>
            <person name="Kajikawa M."/>
            <person name="Saito A."/>
            <person name="Ohmori Y."/>
            <person name="Fujiwara T."/>
        </authorList>
    </citation>
    <scope>FUNCTION</scope>
    <scope>SUBCELLULAR LOCATION</scope>
    <scope>TISSUE SPECIFICITY</scope>
    <scope>MUTAGENESIS OF CYS-407</scope>
    <source>
        <strain>cv. Taichung 65</strain>
    </source>
</reference>
<organism>
    <name type="scientific">Oryza sativa subsp. japonica</name>
    <name type="common">Rice</name>
    <dbReference type="NCBI Taxonomy" id="39947"/>
    <lineage>
        <taxon>Eukaryota</taxon>
        <taxon>Viridiplantae</taxon>
        <taxon>Streptophyta</taxon>
        <taxon>Embryophyta</taxon>
        <taxon>Tracheophyta</taxon>
        <taxon>Spermatophyta</taxon>
        <taxon>Magnoliopsida</taxon>
        <taxon>Liliopsida</taxon>
        <taxon>Poales</taxon>
        <taxon>Poaceae</taxon>
        <taxon>BOP clade</taxon>
        <taxon>Oryzoideae</taxon>
        <taxon>Oryzeae</taxon>
        <taxon>Oryzinae</taxon>
        <taxon>Oryza</taxon>
        <taxon>Oryza sativa</taxon>
    </lineage>
</organism>
<feature type="chain" id="PRO_0000446523" description="Protein TITANIA">
    <location>
        <begin position="1"/>
        <end position="727"/>
    </location>
</feature>
<feature type="zinc finger region" description="PHD-type" evidence="2">
    <location>
        <begin position="406"/>
        <end position="470"/>
    </location>
</feature>
<feature type="region of interest" description="Disordered" evidence="3">
    <location>
        <begin position="1"/>
        <end position="136"/>
    </location>
</feature>
<feature type="coiled-coil region" evidence="1">
    <location>
        <begin position="629"/>
        <end position="697"/>
    </location>
</feature>
<feature type="compositionally biased region" description="Pro residues" evidence="3">
    <location>
        <begin position="14"/>
        <end position="25"/>
    </location>
</feature>
<feature type="compositionally biased region" description="Basic and acidic residues" evidence="3">
    <location>
        <begin position="67"/>
        <end position="88"/>
    </location>
</feature>
<feature type="compositionally biased region" description="Low complexity" evidence="3">
    <location>
        <begin position="104"/>
        <end position="117"/>
    </location>
</feature>
<feature type="mutagenesis site" description="Semi-dwarf phenotype, and reduced growth of roots, shoots and tillers, due to significant reduction of cadmium, cobalt, copper and manganese levels in roots and shoots." evidence="4">
    <original>C</original>
    <variation>Y</variation>
    <location>
        <position position="407"/>
    </location>
</feature>
<evidence type="ECO:0000255" key="1"/>
<evidence type="ECO:0000255" key="2">
    <source>
        <dbReference type="PROSITE-ProRule" id="PRU00146"/>
    </source>
</evidence>
<evidence type="ECO:0000256" key="3">
    <source>
        <dbReference type="SAM" id="MobiDB-lite"/>
    </source>
</evidence>
<evidence type="ECO:0000269" key="4">
    <source>
    </source>
</evidence>
<evidence type="ECO:0000303" key="5">
    <source>
    </source>
</evidence>
<evidence type="ECO:0000305" key="6">
    <source>
    </source>
</evidence>
<evidence type="ECO:0000312" key="7">
    <source>
        <dbReference type="EMBL" id="ABF94873.1"/>
    </source>
</evidence>
<evidence type="ECO:0000312" key="8">
    <source>
        <dbReference type="EMBL" id="BAF11418.1"/>
    </source>
</evidence>
<evidence type="ECO:0000312" key="9">
    <source>
        <dbReference type="EMBL" id="EAZ26214.1"/>
    </source>
</evidence>
<gene>
    <name evidence="5" type="primary">TTA</name>
    <name evidence="5" type="synonym">LC5</name>
    <name evidence="8" type="ordered locus">Os03g0239200</name>
    <name evidence="7" type="ordered locus">LOC_Os03g13590</name>
    <name evidence="9" type="ORF">OsJ_10081</name>
</gene>
<keyword id="KW-0175">Coiled coil</keyword>
<keyword id="KW-0341">Growth regulation</keyword>
<keyword id="KW-0479">Metal-binding</keyword>
<keyword id="KW-0539">Nucleus</keyword>
<keyword id="KW-1185">Reference proteome</keyword>
<keyword id="KW-0804">Transcription</keyword>
<keyword id="KW-0805">Transcription regulation</keyword>
<keyword id="KW-0862">Zinc</keyword>
<keyword id="KW-0863">Zinc-finger</keyword>
<name>TTA1_ORYSJ</name>
<protein>
    <recommendedName>
        <fullName evidence="5">Protein TITANIA</fullName>
        <shortName evidence="5">OsTITANIA</shortName>
        <shortName evidence="5">OsTTA</shortName>
    </recommendedName>
    <alternativeName>
        <fullName evidence="5">Protein LOW CADMIUM 5</fullName>
    </alternativeName>
</protein>
<proteinExistence type="evidence at protein level"/>
<accession>Q10PC5</accession>
<dbReference type="EMBL" id="DP000009">
    <property type="protein sequence ID" value="ABF94873.1"/>
    <property type="molecule type" value="Genomic_DNA"/>
</dbReference>
<dbReference type="EMBL" id="AP008209">
    <property type="protein sequence ID" value="BAF11418.1"/>
    <property type="molecule type" value="Genomic_DNA"/>
</dbReference>
<dbReference type="EMBL" id="AP014959">
    <property type="protein sequence ID" value="BAS83179.1"/>
    <property type="molecule type" value="Genomic_DNA"/>
</dbReference>
<dbReference type="EMBL" id="CM000140">
    <property type="protein sequence ID" value="EAZ26214.1"/>
    <property type="molecule type" value="Genomic_DNA"/>
</dbReference>
<dbReference type="EMBL" id="AK068684">
    <property type="protein sequence ID" value="BAG91028.1"/>
    <property type="molecule type" value="mRNA"/>
</dbReference>
<dbReference type="SMR" id="Q10PC5"/>
<dbReference type="FunCoup" id="Q10PC5">
    <property type="interactions" value="2726"/>
</dbReference>
<dbReference type="STRING" id="39947.Q10PC5"/>
<dbReference type="PaxDb" id="39947-Q10PC5"/>
<dbReference type="EnsemblPlants" id="Os03t0239200-02">
    <property type="protein sequence ID" value="Os03t0239200-02"/>
    <property type="gene ID" value="Os03g0239200"/>
</dbReference>
<dbReference type="EnsemblPlants" id="Os03t0239200-03">
    <property type="protein sequence ID" value="Os03t0239200-03"/>
    <property type="gene ID" value="Os03g0239200"/>
</dbReference>
<dbReference type="EnsemblPlants" id="Os03t0239200-04">
    <property type="protein sequence ID" value="Os03t0239200-04"/>
    <property type="gene ID" value="Os03g0239200"/>
</dbReference>
<dbReference type="Gramene" id="Os03t0239200-02">
    <property type="protein sequence ID" value="Os03t0239200-02"/>
    <property type="gene ID" value="Os03g0239200"/>
</dbReference>
<dbReference type="Gramene" id="Os03t0239200-03">
    <property type="protein sequence ID" value="Os03t0239200-03"/>
    <property type="gene ID" value="Os03g0239200"/>
</dbReference>
<dbReference type="Gramene" id="Os03t0239200-04">
    <property type="protein sequence ID" value="Os03t0239200-04"/>
    <property type="gene ID" value="Os03g0239200"/>
</dbReference>
<dbReference type="KEGG" id="dosa:Os03g0239200"/>
<dbReference type="KEGG" id="osa:4332199"/>
<dbReference type="eggNOG" id="ENOG502QPTA">
    <property type="taxonomic scope" value="Eukaryota"/>
</dbReference>
<dbReference type="HOGENOM" id="CLU_006737_3_0_1"/>
<dbReference type="InParanoid" id="Q10PC5"/>
<dbReference type="OMA" id="CAKNWGL"/>
<dbReference type="OrthoDB" id="1905265at2759"/>
<dbReference type="Proteomes" id="UP000000763">
    <property type="component" value="Chromosome 3"/>
</dbReference>
<dbReference type="Proteomes" id="UP000007752">
    <property type="component" value="Chromosome 3"/>
</dbReference>
<dbReference type="Proteomes" id="UP000059680">
    <property type="component" value="Chromosome 3"/>
</dbReference>
<dbReference type="ExpressionAtlas" id="Q10PC5">
    <property type="expression patterns" value="baseline and differential"/>
</dbReference>
<dbReference type="GO" id="GO:0005634">
    <property type="term" value="C:nucleus"/>
    <property type="evidence" value="ECO:0000315"/>
    <property type="project" value="UniProtKB"/>
</dbReference>
<dbReference type="GO" id="GO:0008270">
    <property type="term" value="F:zinc ion binding"/>
    <property type="evidence" value="ECO:0007669"/>
    <property type="project" value="UniProtKB-KW"/>
</dbReference>
<dbReference type="GO" id="GO:0001708">
    <property type="term" value="P:cell fate specification"/>
    <property type="evidence" value="ECO:0007669"/>
    <property type="project" value="EnsemblPlants"/>
</dbReference>
<dbReference type="GO" id="GO:0009880">
    <property type="term" value="P:embryonic pattern specification"/>
    <property type="evidence" value="ECO:0007669"/>
    <property type="project" value="EnsemblPlants"/>
</dbReference>
<dbReference type="GO" id="GO:0098659">
    <property type="term" value="P:inorganic cation import across plasma membrane"/>
    <property type="evidence" value="ECO:0000315"/>
    <property type="project" value="GO_Central"/>
</dbReference>
<dbReference type="GO" id="GO:0010078">
    <property type="term" value="P:maintenance of root meristem identity"/>
    <property type="evidence" value="ECO:0000318"/>
    <property type="project" value="GO_Central"/>
</dbReference>
<dbReference type="GO" id="GO:0010492">
    <property type="term" value="P:maintenance of shoot apical meristem identity"/>
    <property type="evidence" value="ECO:0000318"/>
    <property type="project" value="GO_Central"/>
</dbReference>
<dbReference type="GO" id="GO:0010468">
    <property type="term" value="P:regulation of gene expression"/>
    <property type="evidence" value="ECO:0000318"/>
    <property type="project" value="GO_Central"/>
</dbReference>
<dbReference type="GO" id="GO:0010071">
    <property type="term" value="P:root meristem specification"/>
    <property type="evidence" value="ECO:0000318"/>
    <property type="project" value="GO_Central"/>
</dbReference>
<dbReference type="CDD" id="cd15612">
    <property type="entry name" value="PHD_OBE1_like"/>
    <property type="match status" value="1"/>
</dbReference>
<dbReference type="InterPro" id="IPR047578">
    <property type="entry name" value="OBE1-like_PHD"/>
</dbReference>
<dbReference type="InterPro" id="IPR004082">
    <property type="entry name" value="OBERON"/>
</dbReference>
<dbReference type="InterPro" id="IPR032881">
    <property type="entry name" value="Oberon-like_PHD"/>
</dbReference>
<dbReference type="InterPro" id="IPR032535">
    <property type="entry name" value="Oberon_cc"/>
</dbReference>
<dbReference type="PANTHER" id="PTHR21736:SF38">
    <property type="entry name" value="PROTEIN OBERON 3"/>
    <property type="match status" value="1"/>
</dbReference>
<dbReference type="PANTHER" id="PTHR21736">
    <property type="entry name" value="VERNALIZATION-INSENSITIVE PROTEIN 3"/>
    <property type="match status" value="1"/>
</dbReference>
<dbReference type="Pfam" id="PF16312">
    <property type="entry name" value="Oberon_cc"/>
    <property type="match status" value="1"/>
</dbReference>
<dbReference type="Pfam" id="PF07227">
    <property type="entry name" value="PHD_Oberon"/>
    <property type="match status" value="1"/>
</dbReference>
<dbReference type="PRINTS" id="PR01544">
    <property type="entry name" value="ARATH130DUF"/>
</dbReference>
<comment type="function">
    <text evidence="4">Probable transcription factor that functions as a regulator of metal transporter genes responsible for essential metals delivery to shoots and normal plant growth (PubMed:30194869). Required for the maintenance of metal transporter gene expression, such as IRT1, IRT2, ZIP1, ZIP9, NRAMP1 and NRAMP5 (PubMed:30194869).</text>
</comment>
<comment type="subcellular location">
    <subcellularLocation>
        <location evidence="4">Nucleus</location>
    </subcellularLocation>
</comment>
<comment type="tissue specificity">
    <text evidence="6">Widely expressed.</text>
</comment>